<keyword id="KW-0210">Decarboxylase</keyword>
<keyword id="KW-0456">Lyase</keyword>
<keyword id="KW-0665">Pyrimidine biosynthesis</keyword>
<protein>
    <recommendedName>
        <fullName evidence="1">Orotidine 5'-phosphate decarboxylase</fullName>
        <ecNumber evidence="1">4.1.1.23</ecNumber>
    </recommendedName>
    <alternativeName>
        <fullName evidence="1">OMP decarboxylase</fullName>
        <shortName evidence="1">OMPDCase</shortName>
        <shortName evidence="1">OMPdecase</shortName>
    </alternativeName>
</protein>
<name>PYRF_ACIBY</name>
<proteinExistence type="inferred from homology"/>
<accession>B0VD17</accession>
<reference key="1">
    <citation type="journal article" date="2008" name="PLoS ONE">
        <title>Comparative analysis of Acinetobacters: three genomes for three lifestyles.</title>
        <authorList>
            <person name="Vallenet D."/>
            <person name="Nordmann P."/>
            <person name="Barbe V."/>
            <person name="Poirel L."/>
            <person name="Mangenot S."/>
            <person name="Bataille E."/>
            <person name="Dossat C."/>
            <person name="Gas S."/>
            <person name="Kreimeyer A."/>
            <person name="Lenoble P."/>
            <person name="Oztas S."/>
            <person name="Poulain J."/>
            <person name="Segurens B."/>
            <person name="Robert C."/>
            <person name="Abergel C."/>
            <person name="Claverie J.-M."/>
            <person name="Raoult D."/>
            <person name="Medigue C."/>
            <person name="Weissenbach J."/>
            <person name="Cruveiller S."/>
        </authorList>
    </citation>
    <scope>NUCLEOTIDE SEQUENCE [LARGE SCALE GENOMIC DNA]</scope>
    <source>
        <strain>AYE</strain>
    </source>
</reference>
<feature type="chain" id="PRO_1000138505" description="Orotidine 5'-phosphate decarboxylase">
    <location>
        <begin position="1"/>
        <end position="227"/>
    </location>
</feature>
<feature type="active site" description="Proton donor" evidence="1">
    <location>
        <position position="59"/>
    </location>
</feature>
<feature type="binding site" evidence="1">
    <location>
        <position position="8"/>
    </location>
    <ligand>
        <name>substrate</name>
    </ligand>
</feature>
<feature type="binding site" evidence="1">
    <location>
        <position position="30"/>
    </location>
    <ligand>
        <name>substrate</name>
    </ligand>
</feature>
<feature type="binding site" evidence="1">
    <location>
        <begin position="57"/>
        <end position="66"/>
    </location>
    <ligand>
        <name>substrate</name>
    </ligand>
</feature>
<feature type="binding site" evidence="1">
    <location>
        <position position="116"/>
    </location>
    <ligand>
        <name>substrate</name>
    </ligand>
</feature>
<feature type="binding site" evidence="1">
    <location>
        <position position="177"/>
    </location>
    <ligand>
        <name>substrate</name>
    </ligand>
</feature>
<feature type="binding site" evidence="1">
    <location>
        <position position="186"/>
    </location>
    <ligand>
        <name>substrate</name>
    </ligand>
</feature>
<feature type="binding site" evidence="1">
    <location>
        <position position="206"/>
    </location>
    <ligand>
        <name>substrate</name>
    </ligand>
</feature>
<feature type="binding site" evidence="1">
    <location>
        <position position="207"/>
    </location>
    <ligand>
        <name>substrate</name>
    </ligand>
</feature>
<evidence type="ECO:0000255" key="1">
    <source>
        <dbReference type="HAMAP-Rule" id="MF_01200"/>
    </source>
</evidence>
<comment type="function">
    <text evidence="1">Catalyzes the decarboxylation of orotidine 5'-monophosphate (OMP) to uridine 5'-monophosphate (UMP).</text>
</comment>
<comment type="catalytic activity">
    <reaction evidence="1">
        <text>orotidine 5'-phosphate + H(+) = UMP + CO2</text>
        <dbReference type="Rhea" id="RHEA:11596"/>
        <dbReference type="ChEBI" id="CHEBI:15378"/>
        <dbReference type="ChEBI" id="CHEBI:16526"/>
        <dbReference type="ChEBI" id="CHEBI:57538"/>
        <dbReference type="ChEBI" id="CHEBI:57865"/>
        <dbReference type="EC" id="4.1.1.23"/>
    </reaction>
</comment>
<comment type="pathway">
    <text evidence="1">Pyrimidine metabolism; UMP biosynthesis via de novo pathway; UMP from orotate: step 2/2.</text>
</comment>
<comment type="subunit">
    <text evidence="1">Homodimer.</text>
</comment>
<comment type="similarity">
    <text evidence="1">Belongs to the OMP decarboxylase family. Type 1 subfamily.</text>
</comment>
<dbReference type="EC" id="4.1.1.23" evidence="1"/>
<dbReference type="EMBL" id="CU459141">
    <property type="protein sequence ID" value="CAM86933.1"/>
    <property type="molecule type" value="Genomic_DNA"/>
</dbReference>
<dbReference type="SMR" id="B0VD17"/>
<dbReference type="EnsemblBacteria" id="CAM86933">
    <property type="protein sequence ID" value="CAM86933"/>
    <property type="gene ID" value="ABAYE2058"/>
</dbReference>
<dbReference type="KEGG" id="aby:ABAYE2058"/>
<dbReference type="HOGENOM" id="CLU_067069_0_0_6"/>
<dbReference type="UniPathway" id="UPA00070">
    <property type="reaction ID" value="UER00120"/>
</dbReference>
<dbReference type="GO" id="GO:0005829">
    <property type="term" value="C:cytosol"/>
    <property type="evidence" value="ECO:0007669"/>
    <property type="project" value="TreeGrafter"/>
</dbReference>
<dbReference type="GO" id="GO:0004590">
    <property type="term" value="F:orotidine-5'-phosphate decarboxylase activity"/>
    <property type="evidence" value="ECO:0007669"/>
    <property type="project" value="UniProtKB-UniRule"/>
</dbReference>
<dbReference type="GO" id="GO:0006207">
    <property type="term" value="P:'de novo' pyrimidine nucleobase biosynthetic process"/>
    <property type="evidence" value="ECO:0007669"/>
    <property type="project" value="InterPro"/>
</dbReference>
<dbReference type="GO" id="GO:0044205">
    <property type="term" value="P:'de novo' UMP biosynthetic process"/>
    <property type="evidence" value="ECO:0007669"/>
    <property type="project" value="UniProtKB-UniRule"/>
</dbReference>
<dbReference type="CDD" id="cd04725">
    <property type="entry name" value="OMP_decarboxylase_like"/>
    <property type="match status" value="1"/>
</dbReference>
<dbReference type="FunFam" id="3.20.20.70:FF:000015">
    <property type="entry name" value="Orotidine 5'-phosphate decarboxylase"/>
    <property type="match status" value="1"/>
</dbReference>
<dbReference type="Gene3D" id="3.20.20.70">
    <property type="entry name" value="Aldolase class I"/>
    <property type="match status" value="1"/>
</dbReference>
<dbReference type="HAMAP" id="MF_01200_B">
    <property type="entry name" value="OMPdecase_type1_B"/>
    <property type="match status" value="1"/>
</dbReference>
<dbReference type="InterPro" id="IPR013785">
    <property type="entry name" value="Aldolase_TIM"/>
</dbReference>
<dbReference type="InterPro" id="IPR014732">
    <property type="entry name" value="OMPdecase"/>
</dbReference>
<dbReference type="InterPro" id="IPR018089">
    <property type="entry name" value="OMPdecase_AS"/>
</dbReference>
<dbReference type="InterPro" id="IPR047596">
    <property type="entry name" value="OMPdecase_bac"/>
</dbReference>
<dbReference type="InterPro" id="IPR001754">
    <property type="entry name" value="OMPdeCOase_dom"/>
</dbReference>
<dbReference type="InterPro" id="IPR011060">
    <property type="entry name" value="RibuloseP-bd_barrel"/>
</dbReference>
<dbReference type="NCBIfam" id="NF001273">
    <property type="entry name" value="PRK00230.1"/>
    <property type="match status" value="1"/>
</dbReference>
<dbReference type="NCBIfam" id="TIGR01740">
    <property type="entry name" value="pyrF"/>
    <property type="match status" value="1"/>
</dbReference>
<dbReference type="PANTHER" id="PTHR32119">
    <property type="entry name" value="OROTIDINE 5'-PHOSPHATE DECARBOXYLASE"/>
    <property type="match status" value="1"/>
</dbReference>
<dbReference type="PANTHER" id="PTHR32119:SF2">
    <property type="entry name" value="OROTIDINE 5'-PHOSPHATE DECARBOXYLASE"/>
    <property type="match status" value="1"/>
</dbReference>
<dbReference type="Pfam" id="PF00215">
    <property type="entry name" value="OMPdecase"/>
    <property type="match status" value="1"/>
</dbReference>
<dbReference type="SMART" id="SM00934">
    <property type="entry name" value="OMPdecase"/>
    <property type="match status" value="1"/>
</dbReference>
<dbReference type="SUPFAM" id="SSF51366">
    <property type="entry name" value="Ribulose-phoshate binding barrel"/>
    <property type="match status" value="1"/>
</dbReference>
<dbReference type="PROSITE" id="PS00156">
    <property type="entry name" value="OMPDECASE"/>
    <property type="match status" value="1"/>
</dbReference>
<gene>
    <name evidence="1" type="primary">pyrF</name>
    <name type="ordered locus">ABAYE2058</name>
</gene>
<organism>
    <name type="scientific">Acinetobacter baumannii (strain AYE)</name>
    <dbReference type="NCBI Taxonomy" id="509173"/>
    <lineage>
        <taxon>Bacteria</taxon>
        <taxon>Pseudomonadati</taxon>
        <taxon>Pseudomonadota</taxon>
        <taxon>Gammaproteobacteria</taxon>
        <taxon>Moraxellales</taxon>
        <taxon>Moraxellaceae</taxon>
        <taxon>Acinetobacter</taxon>
        <taxon>Acinetobacter calcoaceticus/baumannii complex</taxon>
    </lineage>
</organism>
<sequence>MSIIVALDAKSQYDALKIVEQLDPTLCRVKVGKELFTHEGPSVVKKLQEENFEVFLDLKFHDIPNTTAQAVCAAADLGVWMVNVHASGGRKMMETCVERLKAGNYQTQLIAVTVLTSMGREDLKDIGLDIEPVEQVKRLAKLTKESGLDGVVCSAQEAKILRELIGQDFSLVTPGIRPEGSNADDQKRIVTPKQAMLDGSTHLVIGRPITNAENPTEMLKSILASIA</sequence>